<dbReference type="EMBL" id="CP000359">
    <property type="protein sequence ID" value="ABF46159.1"/>
    <property type="molecule type" value="Genomic_DNA"/>
</dbReference>
<dbReference type="RefSeq" id="WP_011530989.1">
    <property type="nucleotide sequence ID" value="NC_008025.1"/>
</dbReference>
<dbReference type="SMR" id="Q1IX75"/>
<dbReference type="STRING" id="319795.Dgeo_1864"/>
<dbReference type="KEGG" id="dge:Dgeo_1864"/>
<dbReference type="eggNOG" id="COG0090">
    <property type="taxonomic scope" value="Bacteria"/>
</dbReference>
<dbReference type="HOGENOM" id="CLU_036235_2_1_0"/>
<dbReference type="Proteomes" id="UP000002431">
    <property type="component" value="Chromosome"/>
</dbReference>
<dbReference type="GO" id="GO:0015934">
    <property type="term" value="C:large ribosomal subunit"/>
    <property type="evidence" value="ECO:0007669"/>
    <property type="project" value="InterPro"/>
</dbReference>
<dbReference type="GO" id="GO:0019843">
    <property type="term" value="F:rRNA binding"/>
    <property type="evidence" value="ECO:0007669"/>
    <property type="project" value="UniProtKB-UniRule"/>
</dbReference>
<dbReference type="GO" id="GO:0003735">
    <property type="term" value="F:structural constituent of ribosome"/>
    <property type="evidence" value="ECO:0007669"/>
    <property type="project" value="InterPro"/>
</dbReference>
<dbReference type="GO" id="GO:0016740">
    <property type="term" value="F:transferase activity"/>
    <property type="evidence" value="ECO:0007669"/>
    <property type="project" value="InterPro"/>
</dbReference>
<dbReference type="GO" id="GO:0002181">
    <property type="term" value="P:cytoplasmic translation"/>
    <property type="evidence" value="ECO:0007669"/>
    <property type="project" value="TreeGrafter"/>
</dbReference>
<dbReference type="FunFam" id="2.30.30.30:FF:000001">
    <property type="entry name" value="50S ribosomal protein L2"/>
    <property type="match status" value="1"/>
</dbReference>
<dbReference type="FunFam" id="2.40.50.140:FF:000003">
    <property type="entry name" value="50S ribosomal protein L2"/>
    <property type="match status" value="1"/>
</dbReference>
<dbReference type="FunFam" id="4.10.950.10:FF:000001">
    <property type="entry name" value="50S ribosomal protein L2"/>
    <property type="match status" value="1"/>
</dbReference>
<dbReference type="Gene3D" id="2.30.30.30">
    <property type="match status" value="1"/>
</dbReference>
<dbReference type="Gene3D" id="2.40.50.140">
    <property type="entry name" value="Nucleic acid-binding proteins"/>
    <property type="match status" value="1"/>
</dbReference>
<dbReference type="Gene3D" id="4.10.950.10">
    <property type="entry name" value="Ribosomal protein L2, domain 3"/>
    <property type="match status" value="1"/>
</dbReference>
<dbReference type="HAMAP" id="MF_01320_B">
    <property type="entry name" value="Ribosomal_uL2_B"/>
    <property type="match status" value="1"/>
</dbReference>
<dbReference type="InterPro" id="IPR012340">
    <property type="entry name" value="NA-bd_OB-fold"/>
</dbReference>
<dbReference type="InterPro" id="IPR014722">
    <property type="entry name" value="Rib_uL2_dom2"/>
</dbReference>
<dbReference type="InterPro" id="IPR002171">
    <property type="entry name" value="Ribosomal_uL2"/>
</dbReference>
<dbReference type="InterPro" id="IPR005880">
    <property type="entry name" value="Ribosomal_uL2_bac/org-type"/>
</dbReference>
<dbReference type="InterPro" id="IPR022669">
    <property type="entry name" value="Ribosomal_uL2_C"/>
</dbReference>
<dbReference type="InterPro" id="IPR022671">
    <property type="entry name" value="Ribosomal_uL2_CS"/>
</dbReference>
<dbReference type="InterPro" id="IPR014726">
    <property type="entry name" value="Ribosomal_uL2_dom3"/>
</dbReference>
<dbReference type="InterPro" id="IPR022666">
    <property type="entry name" value="Ribosomal_uL2_RNA-bd_dom"/>
</dbReference>
<dbReference type="InterPro" id="IPR008991">
    <property type="entry name" value="Translation_prot_SH3-like_sf"/>
</dbReference>
<dbReference type="NCBIfam" id="TIGR01171">
    <property type="entry name" value="rplB_bact"/>
    <property type="match status" value="1"/>
</dbReference>
<dbReference type="PANTHER" id="PTHR13691:SF5">
    <property type="entry name" value="LARGE RIBOSOMAL SUBUNIT PROTEIN UL2M"/>
    <property type="match status" value="1"/>
</dbReference>
<dbReference type="PANTHER" id="PTHR13691">
    <property type="entry name" value="RIBOSOMAL PROTEIN L2"/>
    <property type="match status" value="1"/>
</dbReference>
<dbReference type="Pfam" id="PF00181">
    <property type="entry name" value="Ribosomal_L2"/>
    <property type="match status" value="1"/>
</dbReference>
<dbReference type="Pfam" id="PF03947">
    <property type="entry name" value="Ribosomal_L2_C"/>
    <property type="match status" value="1"/>
</dbReference>
<dbReference type="PIRSF" id="PIRSF002158">
    <property type="entry name" value="Ribosomal_L2"/>
    <property type="match status" value="1"/>
</dbReference>
<dbReference type="SMART" id="SM01383">
    <property type="entry name" value="Ribosomal_L2"/>
    <property type="match status" value="1"/>
</dbReference>
<dbReference type="SMART" id="SM01382">
    <property type="entry name" value="Ribosomal_L2_C"/>
    <property type="match status" value="1"/>
</dbReference>
<dbReference type="SUPFAM" id="SSF50249">
    <property type="entry name" value="Nucleic acid-binding proteins"/>
    <property type="match status" value="1"/>
</dbReference>
<dbReference type="SUPFAM" id="SSF50104">
    <property type="entry name" value="Translation proteins SH3-like domain"/>
    <property type="match status" value="1"/>
</dbReference>
<dbReference type="PROSITE" id="PS00467">
    <property type="entry name" value="RIBOSOMAL_L2"/>
    <property type="match status" value="1"/>
</dbReference>
<accession>Q1IX75</accession>
<organism>
    <name type="scientific">Deinococcus geothermalis (strain DSM 11300 / CIP 105573 / AG-3a)</name>
    <dbReference type="NCBI Taxonomy" id="319795"/>
    <lineage>
        <taxon>Bacteria</taxon>
        <taxon>Thermotogati</taxon>
        <taxon>Deinococcota</taxon>
        <taxon>Deinococci</taxon>
        <taxon>Deinococcales</taxon>
        <taxon>Deinococcaceae</taxon>
        <taxon>Deinococcus</taxon>
    </lineage>
</organism>
<reference key="1">
    <citation type="submission" date="2006-04" db="EMBL/GenBank/DDBJ databases">
        <title>Complete sequence of chromosome of Deinococcus geothermalis DSM 11300.</title>
        <authorList>
            <person name="Copeland A."/>
            <person name="Lucas S."/>
            <person name="Lapidus A."/>
            <person name="Barry K."/>
            <person name="Detter J.C."/>
            <person name="Glavina del Rio T."/>
            <person name="Hammon N."/>
            <person name="Israni S."/>
            <person name="Dalin E."/>
            <person name="Tice H."/>
            <person name="Pitluck S."/>
            <person name="Brettin T."/>
            <person name="Bruce D."/>
            <person name="Han C."/>
            <person name="Tapia R."/>
            <person name="Saunders E."/>
            <person name="Gilna P."/>
            <person name="Schmutz J."/>
            <person name="Larimer F."/>
            <person name="Land M."/>
            <person name="Hauser L."/>
            <person name="Kyrpides N."/>
            <person name="Kim E."/>
            <person name="Daly M.J."/>
            <person name="Fredrickson J.K."/>
            <person name="Makarova K.S."/>
            <person name="Gaidamakova E.K."/>
            <person name="Zhai M."/>
            <person name="Richardson P."/>
        </authorList>
    </citation>
    <scope>NUCLEOTIDE SEQUENCE [LARGE SCALE GENOMIC DNA]</scope>
    <source>
        <strain>DSM 11300 / CIP 105573 / AG-3a</strain>
    </source>
</reference>
<comment type="function">
    <text evidence="1">One of the primary rRNA binding proteins. Required for association of the 30S and 50S subunits to form the 70S ribosome, for tRNA binding and peptide bond formation. It has been suggested to have peptidyltransferase activity; this is somewhat controversial. Makes several contacts with the 16S rRNA in the 70S ribosome.</text>
</comment>
<comment type="subunit">
    <text evidence="1">Part of the 50S ribosomal subunit. Forms a bridge to the 30S subunit in the 70S ribosome.</text>
</comment>
<comment type="similarity">
    <text evidence="1">Belongs to the universal ribosomal protein uL2 family.</text>
</comment>
<sequence>MAVKKYRPYTPSRRQMTTADFSGLTKKRPEKALTVPLPKTGGRNNHGRITSRFIGGGHKRLYRIIDFKRRDKANVPAKVAAIEYDPNRSARIALLHYVDGEKRYILAPEGLTVGQTVNAGPEAEPKLGNALPLRFVPVGAVVHAVELVPGKGAQLARSAGTSIQVQGKERDYVILRLPSGELRRIHSECYATIGTVGNAEHKNIVLGKAGRSRWLGRKPHQRGSAMNPVDHPHGGGEGRTGAGRVPVSPWGQPAKGLKTRKKRKISDRFIITRRGGK</sequence>
<keyword id="KW-0687">Ribonucleoprotein</keyword>
<keyword id="KW-0689">Ribosomal protein</keyword>
<keyword id="KW-0694">RNA-binding</keyword>
<keyword id="KW-0699">rRNA-binding</keyword>
<proteinExistence type="inferred from homology"/>
<name>RL2_DEIGD</name>
<protein>
    <recommendedName>
        <fullName evidence="1">Large ribosomal subunit protein uL2</fullName>
    </recommendedName>
    <alternativeName>
        <fullName evidence="3">50S ribosomal protein L2</fullName>
    </alternativeName>
</protein>
<feature type="chain" id="PRO_0000309908" description="Large ribosomal subunit protein uL2">
    <location>
        <begin position="1"/>
        <end position="277"/>
    </location>
</feature>
<feature type="region of interest" description="Disordered" evidence="2">
    <location>
        <begin position="215"/>
        <end position="263"/>
    </location>
</feature>
<evidence type="ECO:0000255" key="1">
    <source>
        <dbReference type="HAMAP-Rule" id="MF_01320"/>
    </source>
</evidence>
<evidence type="ECO:0000256" key="2">
    <source>
        <dbReference type="SAM" id="MobiDB-lite"/>
    </source>
</evidence>
<evidence type="ECO:0000305" key="3"/>
<gene>
    <name evidence="1" type="primary">rplB</name>
    <name type="ordered locus">Dgeo_1864</name>
</gene>